<keyword id="KW-0963">Cytoplasm</keyword>
<keyword id="KW-0227">DNA damage</keyword>
<keyword id="KW-0228">DNA excision</keyword>
<keyword id="KW-0234">DNA repair</keyword>
<keyword id="KW-0267">Excision nuclease</keyword>
<keyword id="KW-1185">Reference proteome</keyword>
<keyword id="KW-0742">SOS response</keyword>
<comment type="function">
    <text evidence="1">The UvrABC repair system catalyzes the recognition and processing of DNA lesions. UvrC both incises the 5' and 3' sides of the lesion. The N-terminal half is responsible for the 3' incision and the C-terminal half is responsible for the 5' incision.</text>
</comment>
<comment type="subunit">
    <text evidence="1">Interacts with UvrB in an incision complex.</text>
</comment>
<comment type="subcellular location">
    <subcellularLocation>
        <location evidence="1">Cytoplasm</location>
    </subcellularLocation>
</comment>
<comment type="similarity">
    <text evidence="1">Belongs to the UvrC family.</text>
</comment>
<sequence>MNQTIKAKLELLPDSPGCYLHKDKNGTVIYVGKAKNLKNRVRSYFHGSHNTKTELLVSEIEDLEWIVVGSNIESLVLEINLIQRYKPKYNIMLKDDKYYPFLKITNEKYPRLLVVRKVQKDGATYFGPYPDVKAANEVKRLLDRIFPFRKCGLHEKKVCFYFHIHQCLCPVVNHVDPQVFKDMTQEVKEFLTGSDKKIVNELEAKMMVSSDNMEFEQAAEYRDVIKAIGTLRTKQRVMNQDLKDRDVFGYYVDKGWMCVQVFFVRQGKLIQRDVNMFPYYNDAEEDFLTYIGQFYQDNNHMMPREIFIPQDIDKESVEAVVAASQEGNLLTKAQAKEVDAKVFTAKTLKFSDQKDVEQSIVKLDKELSAEKRLSSLLAKTQIVQPSRGEKKQLVNMATKNAQSQLQLKFDVAERDILKTTKAVENLGKILGIPKPVRIESFDNSNIMGTSPVSAMVVFIDGKPSKKDYRKYKIKTVVGADDYASMREVMTRRYSRALKEETALPDLIAMDGGAGQVNITKQVLKELGLSIPVAGMQKNDKHQTSELLFGDPLDVVPLSRQSQEFFLLTRIQDEVHRFAITFHRQLRGKNTFSSKLDGIVGLGPKRKQKLLTTFKNLKAIEEASVQEVAEADIPYEVAERVKTTLSGPIQENENWESLKDNVPLLEGKK</sequence>
<organism>
    <name type="scientific">Lactococcus lactis subsp. lactis (strain IL1403)</name>
    <name type="common">Streptococcus lactis</name>
    <dbReference type="NCBI Taxonomy" id="272623"/>
    <lineage>
        <taxon>Bacteria</taxon>
        <taxon>Bacillati</taxon>
        <taxon>Bacillota</taxon>
        <taxon>Bacilli</taxon>
        <taxon>Lactobacillales</taxon>
        <taxon>Streptococcaceae</taxon>
        <taxon>Lactococcus</taxon>
    </lineage>
</organism>
<name>UVRC_LACLA</name>
<reference key="1">
    <citation type="journal article" date="2001" name="Genome Res.">
        <title>The complete genome sequence of the lactic acid bacterium Lactococcus lactis ssp. lactis IL1403.</title>
        <authorList>
            <person name="Bolotin A."/>
            <person name="Wincker P."/>
            <person name="Mauger S."/>
            <person name="Jaillon O."/>
            <person name="Malarme K."/>
            <person name="Weissenbach J."/>
            <person name="Ehrlich S.D."/>
            <person name="Sorokin A."/>
        </authorList>
    </citation>
    <scope>NUCLEOTIDE SEQUENCE [LARGE SCALE GENOMIC DNA]</scope>
    <source>
        <strain>IL1403</strain>
    </source>
</reference>
<proteinExistence type="inferred from homology"/>
<feature type="chain" id="PRO_0000138307" description="UvrABC system protein C">
    <location>
        <begin position="1"/>
        <end position="668"/>
    </location>
</feature>
<feature type="domain" description="GIY-YIG" evidence="1">
    <location>
        <begin position="14"/>
        <end position="91"/>
    </location>
</feature>
<feature type="domain" description="UVR" evidence="1">
    <location>
        <begin position="196"/>
        <end position="231"/>
    </location>
</feature>
<protein>
    <recommendedName>
        <fullName evidence="1">UvrABC system protein C</fullName>
        <shortName evidence="1">Protein UvrC</shortName>
    </recommendedName>
    <alternativeName>
        <fullName evidence="1">Excinuclease ABC subunit C</fullName>
    </alternativeName>
</protein>
<accession>Q9CH98</accession>
<dbReference type="EMBL" id="AE005176">
    <property type="protein sequence ID" value="AAK04938.1"/>
    <property type="molecule type" value="Genomic_DNA"/>
</dbReference>
<dbReference type="PIR" id="H86729">
    <property type="entry name" value="H86729"/>
</dbReference>
<dbReference type="RefSeq" id="NP_266996.1">
    <property type="nucleotide sequence ID" value="NC_002662.1"/>
</dbReference>
<dbReference type="SMR" id="Q9CH98"/>
<dbReference type="PaxDb" id="272623-L0258"/>
<dbReference type="EnsemblBacteria" id="AAK04938">
    <property type="protein sequence ID" value="AAK04938"/>
    <property type="gene ID" value="L0258"/>
</dbReference>
<dbReference type="KEGG" id="lla:L0258"/>
<dbReference type="PATRIC" id="fig|272623.7.peg.899"/>
<dbReference type="eggNOG" id="COG0322">
    <property type="taxonomic scope" value="Bacteria"/>
</dbReference>
<dbReference type="HOGENOM" id="CLU_014841_3_2_9"/>
<dbReference type="OrthoDB" id="9804933at2"/>
<dbReference type="Proteomes" id="UP000002196">
    <property type="component" value="Chromosome"/>
</dbReference>
<dbReference type="GO" id="GO:0005737">
    <property type="term" value="C:cytoplasm"/>
    <property type="evidence" value="ECO:0007669"/>
    <property type="project" value="UniProtKB-SubCell"/>
</dbReference>
<dbReference type="GO" id="GO:0009380">
    <property type="term" value="C:excinuclease repair complex"/>
    <property type="evidence" value="ECO:0007669"/>
    <property type="project" value="InterPro"/>
</dbReference>
<dbReference type="GO" id="GO:0003677">
    <property type="term" value="F:DNA binding"/>
    <property type="evidence" value="ECO:0007669"/>
    <property type="project" value="UniProtKB-UniRule"/>
</dbReference>
<dbReference type="GO" id="GO:0009381">
    <property type="term" value="F:excinuclease ABC activity"/>
    <property type="evidence" value="ECO:0007669"/>
    <property type="project" value="UniProtKB-UniRule"/>
</dbReference>
<dbReference type="GO" id="GO:0006289">
    <property type="term" value="P:nucleotide-excision repair"/>
    <property type="evidence" value="ECO:0007669"/>
    <property type="project" value="UniProtKB-UniRule"/>
</dbReference>
<dbReference type="GO" id="GO:0009432">
    <property type="term" value="P:SOS response"/>
    <property type="evidence" value="ECO:0007669"/>
    <property type="project" value="UniProtKB-UniRule"/>
</dbReference>
<dbReference type="CDD" id="cd10434">
    <property type="entry name" value="GIY-YIG_UvrC_Cho"/>
    <property type="match status" value="1"/>
</dbReference>
<dbReference type="FunFam" id="3.30.420.340:FF:000002">
    <property type="entry name" value="UvrABC system protein C"/>
    <property type="match status" value="1"/>
</dbReference>
<dbReference type="FunFam" id="3.40.1440.10:FF:000001">
    <property type="entry name" value="UvrABC system protein C"/>
    <property type="match status" value="1"/>
</dbReference>
<dbReference type="Gene3D" id="1.10.150.20">
    <property type="entry name" value="5' to 3' exonuclease, C-terminal subdomain"/>
    <property type="match status" value="1"/>
</dbReference>
<dbReference type="Gene3D" id="3.40.1440.10">
    <property type="entry name" value="GIY-YIG endonuclease"/>
    <property type="match status" value="1"/>
</dbReference>
<dbReference type="Gene3D" id="4.10.860.10">
    <property type="entry name" value="UVR domain"/>
    <property type="match status" value="1"/>
</dbReference>
<dbReference type="Gene3D" id="3.30.420.340">
    <property type="entry name" value="UvrC, RNAse H endonuclease domain"/>
    <property type="match status" value="1"/>
</dbReference>
<dbReference type="HAMAP" id="MF_00203">
    <property type="entry name" value="UvrC"/>
    <property type="match status" value="1"/>
</dbReference>
<dbReference type="InterPro" id="IPR000305">
    <property type="entry name" value="GIY-YIG_endonuc"/>
</dbReference>
<dbReference type="InterPro" id="IPR035901">
    <property type="entry name" value="GIY-YIG_endonuc_sf"/>
</dbReference>
<dbReference type="InterPro" id="IPR047296">
    <property type="entry name" value="GIY-YIG_UvrC_Cho"/>
</dbReference>
<dbReference type="InterPro" id="IPR010994">
    <property type="entry name" value="RuvA_2-like"/>
</dbReference>
<dbReference type="InterPro" id="IPR001943">
    <property type="entry name" value="UVR_dom"/>
</dbReference>
<dbReference type="InterPro" id="IPR036876">
    <property type="entry name" value="UVR_dom_sf"/>
</dbReference>
<dbReference type="InterPro" id="IPR050066">
    <property type="entry name" value="UvrABC_protein_C"/>
</dbReference>
<dbReference type="InterPro" id="IPR004791">
    <property type="entry name" value="UvrC"/>
</dbReference>
<dbReference type="InterPro" id="IPR001162">
    <property type="entry name" value="UvrC_RNase_H_dom"/>
</dbReference>
<dbReference type="InterPro" id="IPR038476">
    <property type="entry name" value="UvrC_RNase_H_dom_sf"/>
</dbReference>
<dbReference type="NCBIfam" id="TIGR00194">
    <property type="entry name" value="uvrC"/>
    <property type="match status" value="1"/>
</dbReference>
<dbReference type="PANTHER" id="PTHR30562:SF1">
    <property type="entry name" value="UVRABC SYSTEM PROTEIN C"/>
    <property type="match status" value="1"/>
</dbReference>
<dbReference type="PANTHER" id="PTHR30562">
    <property type="entry name" value="UVRC/OXIDOREDUCTASE"/>
    <property type="match status" value="1"/>
</dbReference>
<dbReference type="Pfam" id="PF01541">
    <property type="entry name" value="GIY-YIG"/>
    <property type="match status" value="1"/>
</dbReference>
<dbReference type="Pfam" id="PF02151">
    <property type="entry name" value="UVR"/>
    <property type="match status" value="1"/>
</dbReference>
<dbReference type="Pfam" id="PF22920">
    <property type="entry name" value="UvrC_RNaseH"/>
    <property type="match status" value="2"/>
</dbReference>
<dbReference type="Pfam" id="PF08459">
    <property type="entry name" value="UvrC_RNaseH_dom"/>
    <property type="match status" value="1"/>
</dbReference>
<dbReference type="SMART" id="SM00465">
    <property type="entry name" value="GIYc"/>
    <property type="match status" value="1"/>
</dbReference>
<dbReference type="SUPFAM" id="SSF46600">
    <property type="entry name" value="C-terminal UvrC-binding domain of UvrB"/>
    <property type="match status" value="1"/>
</dbReference>
<dbReference type="SUPFAM" id="SSF82771">
    <property type="entry name" value="GIY-YIG endonuclease"/>
    <property type="match status" value="1"/>
</dbReference>
<dbReference type="SUPFAM" id="SSF47781">
    <property type="entry name" value="RuvA domain 2-like"/>
    <property type="match status" value="1"/>
</dbReference>
<dbReference type="PROSITE" id="PS50164">
    <property type="entry name" value="GIY_YIG"/>
    <property type="match status" value="1"/>
</dbReference>
<dbReference type="PROSITE" id="PS50151">
    <property type="entry name" value="UVR"/>
    <property type="match status" value="1"/>
</dbReference>
<dbReference type="PROSITE" id="PS50165">
    <property type="entry name" value="UVRC"/>
    <property type="match status" value="1"/>
</dbReference>
<evidence type="ECO:0000255" key="1">
    <source>
        <dbReference type="HAMAP-Rule" id="MF_00203"/>
    </source>
</evidence>
<gene>
    <name evidence="1" type="primary">uvrC</name>
    <name type="ordered locus">LL0840</name>
    <name type="ORF">L0258</name>
</gene>